<name>PETL_CUSRE</name>
<dbReference type="EMBL" id="AM711640">
    <property type="protein sequence ID" value="CAM98409.1"/>
    <property type="molecule type" value="Genomic_DNA"/>
</dbReference>
<dbReference type="RefSeq" id="YP_001430123.1">
    <property type="nucleotide sequence ID" value="NC_009766.1"/>
</dbReference>
<dbReference type="SMR" id="A7M981"/>
<dbReference type="GeneID" id="5536607"/>
<dbReference type="GO" id="GO:0009512">
    <property type="term" value="C:cytochrome b6f complex"/>
    <property type="evidence" value="ECO:0007669"/>
    <property type="project" value="InterPro"/>
</dbReference>
<dbReference type="GO" id="GO:0055035">
    <property type="term" value="C:plastid thylakoid membrane"/>
    <property type="evidence" value="ECO:0007669"/>
    <property type="project" value="UniProtKB-SubCell"/>
</dbReference>
<dbReference type="GO" id="GO:0045158">
    <property type="term" value="F:electron transporter, transferring electrons within cytochrome b6/f complex of photosystem II activity"/>
    <property type="evidence" value="ECO:0007669"/>
    <property type="project" value="UniProtKB-UniRule"/>
</dbReference>
<dbReference type="GO" id="GO:0015979">
    <property type="term" value="P:photosynthesis"/>
    <property type="evidence" value="ECO:0007669"/>
    <property type="project" value="UniProtKB-KW"/>
</dbReference>
<dbReference type="HAMAP" id="MF_00433">
    <property type="entry name" value="Cytb6_f_PetL"/>
    <property type="match status" value="1"/>
</dbReference>
<dbReference type="InterPro" id="IPR007802">
    <property type="entry name" value="Cyt_b6/f_cplx_su6"/>
</dbReference>
<dbReference type="PANTHER" id="PTHR37266">
    <property type="entry name" value="CYTOCHROME B6-F COMPLEX SUBUNIT 6"/>
    <property type="match status" value="1"/>
</dbReference>
<dbReference type="PANTHER" id="PTHR37266:SF1">
    <property type="entry name" value="CYTOCHROME B6-F COMPLEX SUBUNIT 6"/>
    <property type="match status" value="1"/>
</dbReference>
<dbReference type="Pfam" id="PF05115">
    <property type="entry name" value="PetL"/>
    <property type="match status" value="1"/>
</dbReference>
<dbReference type="SUPFAM" id="SSF103436">
    <property type="entry name" value="PetL subunit of the cytochrome b6f complex"/>
    <property type="match status" value="1"/>
</dbReference>
<geneLocation type="plastid"/>
<gene>
    <name type="primary">petL</name>
</gene>
<organism>
    <name type="scientific">Cuscuta reflexa</name>
    <name type="common">Southern Asian dodder</name>
    <dbReference type="NCBI Taxonomy" id="4129"/>
    <lineage>
        <taxon>Eukaryota</taxon>
        <taxon>Viridiplantae</taxon>
        <taxon>Streptophyta</taxon>
        <taxon>Embryophyta</taxon>
        <taxon>Tracheophyta</taxon>
        <taxon>Spermatophyta</taxon>
        <taxon>Magnoliopsida</taxon>
        <taxon>eudicotyledons</taxon>
        <taxon>Gunneridae</taxon>
        <taxon>Pentapetalae</taxon>
        <taxon>asterids</taxon>
        <taxon>lamiids</taxon>
        <taxon>Solanales</taxon>
        <taxon>Convolvulaceae</taxon>
        <taxon>Cuscuteae</taxon>
        <taxon>Cuscuta</taxon>
        <taxon>Cuscuta subgen. Monogynella</taxon>
    </lineage>
</organism>
<keyword id="KW-0249">Electron transport</keyword>
<keyword id="KW-0472">Membrane</keyword>
<keyword id="KW-0602">Photosynthesis</keyword>
<keyword id="KW-0934">Plastid</keyword>
<keyword id="KW-0793">Thylakoid</keyword>
<keyword id="KW-0812">Transmembrane</keyword>
<keyword id="KW-1133">Transmembrane helix</keyword>
<keyword id="KW-0813">Transport</keyword>
<sequence>MLTITSYFGFLVAAFTITSALFIGLNKIRLI</sequence>
<reference key="1">
    <citation type="journal article" date="2007" name="BMC Plant Biol.">
        <title>Complete DNA sequences of the plastid genomes of two parasitic flowering plant species, Cuscuta reflexa and Cuscuta gronovii.</title>
        <authorList>
            <person name="Funk H.T."/>
            <person name="Berg S."/>
            <person name="Krupinska K."/>
            <person name="Maier U.-G."/>
            <person name="Krause K."/>
        </authorList>
    </citation>
    <scope>NUCLEOTIDE SEQUENCE [LARGE SCALE GENOMIC DNA]</scope>
    <scope>ABSENCE OF RNA EDITING</scope>
</reference>
<protein>
    <recommendedName>
        <fullName>Cytochrome b6-f complex subunit 6</fullName>
    </recommendedName>
    <alternativeName>
        <fullName>Cytochrome b6-f complex subunit PetL</fullName>
    </alternativeName>
    <alternativeName>
        <fullName>Cytochrome b6-f complex subunit VI</fullName>
    </alternativeName>
</protein>
<comment type="function">
    <text evidence="1">Component of the cytochrome b6-f complex, which mediates electron transfer between photosystem II (PSII) and photosystem I (PSI), cyclic electron flow around PSI, and state transitions. PetL is important for photoautotrophic growth as well as for electron transfer efficiency and stability of the cytochrome b6-f complex (By similarity).</text>
</comment>
<comment type="subunit">
    <text evidence="1">The 4 large subunits of the cytochrome b6-f complex are cytochrome b6, subunit IV (17 kDa polypeptide, PetD), cytochrome f and the Rieske protein, while the 4 small subunits are PetG, PetL, PetM and PetN. The complex functions as a dimer (By similarity).</text>
</comment>
<comment type="subcellular location">
    <subcellularLocation>
        <location evidence="3">Plastid thylakoid membrane</location>
        <topology evidence="3">Single-pass membrane protein</topology>
    </subcellularLocation>
</comment>
<comment type="similarity">
    <text evidence="3">Belongs to the PetL family.</text>
</comment>
<comment type="caution">
    <text evidence="3">Young tissue from this organism is photosynthetic and contains some thylakoids, although the photosynthetic activity does not exceed the light compensation point.</text>
</comment>
<proteinExistence type="evidence at transcript level"/>
<accession>A7M981</accession>
<evidence type="ECO:0000250" key="1"/>
<evidence type="ECO:0000255" key="2"/>
<evidence type="ECO:0000305" key="3"/>
<feature type="chain" id="PRO_0000308469" description="Cytochrome b6-f complex subunit 6">
    <location>
        <begin position="1"/>
        <end position="31"/>
    </location>
</feature>
<feature type="transmembrane region" description="Helical" evidence="2">
    <location>
        <begin position="4"/>
        <end position="24"/>
    </location>
</feature>